<name>TILS_STAAW</name>
<protein>
    <recommendedName>
        <fullName evidence="1">tRNA(Ile)-lysidine synthase</fullName>
        <ecNumber evidence="1">6.3.4.19</ecNumber>
    </recommendedName>
    <alternativeName>
        <fullName evidence="1">tRNA(Ile)-2-lysyl-cytidine synthase</fullName>
    </alternativeName>
    <alternativeName>
        <fullName evidence="1">tRNA(Ile)-lysidine synthetase</fullName>
    </alternativeName>
</protein>
<keyword id="KW-0067">ATP-binding</keyword>
<keyword id="KW-0963">Cytoplasm</keyword>
<keyword id="KW-0436">Ligase</keyword>
<keyword id="KW-0547">Nucleotide-binding</keyword>
<keyword id="KW-0819">tRNA processing</keyword>
<dbReference type="EC" id="6.3.4.19" evidence="1"/>
<dbReference type="EMBL" id="BA000033">
    <property type="protein sequence ID" value="BAB94329.1"/>
    <property type="molecule type" value="Genomic_DNA"/>
</dbReference>
<dbReference type="RefSeq" id="WP_001176724.1">
    <property type="nucleotide sequence ID" value="NC_003923.1"/>
</dbReference>
<dbReference type="SMR" id="Q8NXZ4"/>
<dbReference type="KEGG" id="sam:MW0464"/>
<dbReference type="HOGENOM" id="CLU_018869_0_2_9"/>
<dbReference type="GO" id="GO:0005737">
    <property type="term" value="C:cytoplasm"/>
    <property type="evidence" value="ECO:0007669"/>
    <property type="project" value="UniProtKB-SubCell"/>
</dbReference>
<dbReference type="GO" id="GO:0005524">
    <property type="term" value="F:ATP binding"/>
    <property type="evidence" value="ECO:0007669"/>
    <property type="project" value="UniProtKB-KW"/>
</dbReference>
<dbReference type="GO" id="GO:0032267">
    <property type="term" value="F:tRNA(Ile)-lysidine synthase activity"/>
    <property type="evidence" value="ECO:0007669"/>
    <property type="project" value="UniProtKB-EC"/>
</dbReference>
<dbReference type="GO" id="GO:0006400">
    <property type="term" value="P:tRNA modification"/>
    <property type="evidence" value="ECO:0007669"/>
    <property type="project" value="UniProtKB-UniRule"/>
</dbReference>
<dbReference type="CDD" id="cd01992">
    <property type="entry name" value="TilS_N"/>
    <property type="match status" value="1"/>
</dbReference>
<dbReference type="Gene3D" id="3.40.50.620">
    <property type="entry name" value="HUPs"/>
    <property type="match status" value="1"/>
</dbReference>
<dbReference type="HAMAP" id="MF_01161">
    <property type="entry name" value="tRNA_Ile_lys_synt"/>
    <property type="match status" value="1"/>
</dbReference>
<dbReference type="InterPro" id="IPR012796">
    <property type="entry name" value="Lysidine-tRNA-synth_C"/>
</dbReference>
<dbReference type="InterPro" id="IPR014729">
    <property type="entry name" value="Rossmann-like_a/b/a_fold"/>
</dbReference>
<dbReference type="InterPro" id="IPR011063">
    <property type="entry name" value="TilS/TtcA_N"/>
</dbReference>
<dbReference type="InterPro" id="IPR012094">
    <property type="entry name" value="tRNA_Ile_lys_synt"/>
</dbReference>
<dbReference type="InterPro" id="IPR012795">
    <property type="entry name" value="tRNA_Ile_lys_synt_N"/>
</dbReference>
<dbReference type="NCBIfam" id="TIGR02433">
    <property type="entry name" value="lysidine_TilS_C"/>
    <property type="match status" value="1"/>
</dbReference>
<dbReference type="NCBIfam" id="TIGR02432">
    <property type="entry name" value="lysidine_TilS_N"/>
    <property type="match status" value="1"/>
</dbReference>
<dbReference type="PANTHER" id="PTHR43033">
    <property type="entry name" value="TRNA(ILE)-LYSIDINE SYNTHASE-RELATED"/>
    <property type="match status" value="1"/>
</dbReference>
<dbReference type="PANTHER" id="PTHR43033:SF1">
    <property type="entry name" value="TRNA(ILE)-LYSIDINE SYNTHASE-RELATED"/>
    <property type="match status" value="1"/>
</dbReference>
<dbReference type="Pfam" id="PF01171">
    <property type="entry name" value="ATP_bind_3"/>
    <property type="match status" value="1"/>
</dbReference>
<dbReference type="Pfam" id="PF11734">
    <property type="entry name" value="TilS_C"/>
    <property type="match status" value="1"/>
</dbReference>
<dbReference type="SMART" id="SM00977">
    <property type="entry name" value="TilS_C"/>
    <property type="match status" value="1"/>
</dbReference>
<dbReference type="SUPFAM" id="SSF52402">
    <property type="entry name" value="Adenine nucleotide alpha hydrolases-like"/>
    <property type="match status" value="1"/>
</dbReference>
<dbReference type="SUPFAM" id="SSF56037">
    <property type="entry name" value="PheT/TilS domain"/>
    <property type="match status" value="1"/>
</dbReference>
<accession>Q8NXZ4</accession>
<gene>
    <name evidence="1" type="primary">tilS</name>
    <name type="ordered locus">MW0464</name>
</gene>
<comment type="function">
    <text evidence="1">Ligates lysine onto the cytidine present at position 34 of the AUA codon-specific tRNA(Ile) that contains the anticodon CAU, in an ATP-dependent manner. Cytidine is converted to lysidine, thus changing the amino acid specificity of the tRNA from methionine to isoleucine.</text>
</comment>
<comment type="catalytic activity">
    <reaction evidence="1">
        <text>cytidine(34) in tRNA(Ile2) + L-lysine + ATP = lysidine(34) in tRNA(Ile2) + AMP + diphosphate + H(+)</text>
        <dbReference type="Rhea" id="RHEA:43744"/>
        <dbReference type="Rhea" id="RHEA-COMP:10625"/>
        <dbReference type="Rhea" id="RHEA-COMP:10670"/>
        <dbReference type="ChEBI" id="CHEBI:15378"/>
        <dbReference type="ChEBI" id="CHEBI:30616"/>
        <dbReference type="ChEBI" id="CHEBI:32551"/>
        <dbReference type="ChEBI" id="CHEBI:33019"/>
        <dbReference type="ChEBI" id="CHEBI:82748"/>
        <dbReference type="ChEBI" id="CHEBI:83665"/>
        <dbReference type="ChEBI" id="CHEBI:456215"/>
        <dbReference type="EC" id="6.3.4.19"/>
    </reaction>
</comment>
<comment type="subcellular location">
    <subcellularLocation>
        <location evidence="1">Cytoplasm</location>
    </subcellularLocation>
</comment>
<comment type="domain">
    <text>The N-terminal region contains the highly conserved SGGXDS motif, predicted to be a P-loop motif involved in ATP binding.</text>
</comment>
<comment type="similarity">
    <text evidence="1">Belongs to the tRNA(Ile)-lysidine synthase family.</text>
</comment>
<proteinExistence type="inferred from homology"/>
<feature type="chain" id="PRO_0000181770" description="tRNA(Ile)-lysidine synthase">
    <location>
        <begin position="1"/>
        <end position="431"/>
    </location>
</feature>
<feature type="binding site" evidence="1">
    <location>
        <begin position="19"/>
        <end position="24"/>
    </location>
    <ligand>
        <name>ATP</name>
        <dbReference type="ChEBI" id="CHEBI:30616"/>
    </ligand>
</feature>
<sequence>MQLNSNGWHVDDHIVVAVSTGIDSMCLLYQLLNDYKDSYRKLTCLHVNHGVRSASIEEARFLEVYCERHHIDLHIKKLDLSHSLDRNNSIQNEARIKRYEWFDEMMNVLEADVLLTAHHLDDQLETIMYRIFNGKSTRNKLGFDELSKRKGYQIYRPLLAVSKKEIKQFQERYHIPYFEDESNKDNKYVRNDIRNRIIPAIDENNQLKASHLLKLKQWHDEQYDILQYSAKQFIQEFVKFDEQSKYLEVSRQAFNNLPNSLKMVVLDCLLSKYYELFNISAKTYEEWFKQFSSKKAQFSINLTDKWIIQIAYGKLIIMAKNNGDTYFRVQTIEKPGNYIFNKYRLEIHSNLPKCLFPLTVRTRQSGDTFKLNGRDGYKKVNRLFIDCKVQQWVRDQMPIVLDKQQRIIAVGDLYQQQTIKQWIIISKNGDE</sequence>
<reference key="1">
    <citation type="journal article" date="2002" name="Lancet">
        <title>Genome and virulence determinants of high virulence community-acquired MRSA.</title>
        <authorList>
            <person name="Baba T."/>
            <person name="Takeuchi F."/>
            <person name="Kuroda M."/>
            <person name="Yuzawa H."/>
            <person name="Aoki K."/>
            <person name="Oguchi A."/>
            <person name="Nagai Y."/>
            <person name="Iwama N."/>
            <person name="Asano K."/>
            <person name="Naimi T."/>
            <person name="Kuroda H."/>
            <person name="Cui L."/>
            <person name="Yamamoto K."/>
            <person name="Hiramatsu K."/>
        </authorList>
    </citation>
    <scope>NUCLEOTIDE SEQUENCE [LARGE SCALE GENOMIC DNA]</scope>
    <source>
        <strain>MW2</strain>
    </source>
</reference>
<evidence type="ECO:0000255" key="1">
    <source>
        <dbReference type="HAMAP-Rule" id="MF_01161"/>
    </source>
</evidence>
<organism>
    <name type="scientific">Staphylococcus aureus (strain MW2)</name>
    <dbReference type="NCBI Taxonomy" id="196620"/>
    <lineage>
        <taxon>Bacteria</taxon>
        <taxon>Bacillati</taxon>
        <taxon>Bacillota</taxon>
        <taxon>Bacilli</taxon>
        <taxon>Bacillales</taxon>
        <taxon>Staphylococcaceae</taxon>
        <taxon>Staphylococcus</taxon>
    </lineage>
</organism>